<name>COF4_DICDI</name>
<gene>
    <name type="primary">cofE</name>
    <name type="ORF">DDB_G0283367</name>
</gene>
<reference key="1">
    <citation type="journal article" date="2005" name="Nature">
        <title>The genome of the social amoeba Dictyostelium discoideum.</title>
        <authorList>
            <person name="Eichinger L."/>
            <person name="Pachebat J.A."/>
            <person name="Gloeckner G."/>
            <person name="Rajandream M.A."/>
            <person name="Sucgang R."/>
            <person name="Berriman M."/>
            <person name="Song J."/>
            <person name="Olsen R."/>
            <person name="Szafranski K."/>
            <person name="Xu Q."/>
            <person name="Tunggal B."/>
            <person name="Kummerfeld S."/>
            <person name="Madera M."/>
            <person name="Konfortov B.A."/>
            <person name="Rivero F."/>
            <person name="Bankier A.T."/>
            <person name="Lehmann R."/>
            <person name="Hamlin N."/>
            <person name="Davies R."/>
            <person name="Gaudet P."/>
            <person name="Fey P."/>
            <person name="Pilcher K."/>
            <person name="Chen G."/>
            <person name="Saunders D."/>
            <person name="Sodergren E.J."/>
            <person name="Davis P."/>
            <person name="Kerhornou A."/>
            <person name="Nie X."/>
            <person name="Hall N."/>
            <person name="Anjard C."/>
            <person name="Hemphill L."/>
            <person name="Bason N."/>
            <person name="Farbrother P."/>
            <person name="Desany B."/>
            <person name="Just E."/>
            <person name="Morio T."/>
            <person name="Rost R."/>
            <person name="Churcher C.M."/>
            <person name="Cooper J."/>
            <person name="Haydock S."/>
            <person name="van Driessche N."/>
            <person name="Cronin A."/>
            <person name="Goodhead I."/>
            <person name="Muzny D.M."/>
            <person name="Mourier T."/>
            <person name="Pain A."/>
            <person name="Lu M."/>
            <person name="Harper D."/>
            <person name="Lindsay R."/>
            <person name="Hauser H."/>
            <person name="James K.D."/>
            <person name="Quiles M."/>
            <person name="Madan Babu M."/>
            <person name="Saito T."/>
            <person name="Buchrieser C."/>
            <person name="Wardroper A."/>
            <person name="Felder M."/>
            <person name="Thangavelu M."/>
            <person name="Johnson D."/>
            <person name="Knights A."/>
            <person name="Loulseged H."/>
            <person name="Mungall K.L."/>
            <person name="Oliver K."/>
            <person name="Price C."/>
            <person name="Quail M.A."/>
            <person name="Urushihara H."/>
            <person name="Hernandez J."/>
            <person name="Rabbinowitsch E."/>
            <person name="Steffen D."/>
            <person name="Sanders M."/>
            <person name="Ma J."/>
            <person name="Kohara Y."/>
            <person name="Sharp S."/>
            <person name="Simmonds M.N."/>
            <person name="Spiegler S."/>
            <person name="Tivey A."/>
            <person name="Sugano S."/>
            <person name="White B."/>
            <person name="Walker D."/>
            <person name="Woodward J.R."/>
            <person name="Winckler T."/>
            <person name="Tanaka Y."/>
            <person name="Shaulsky G."/>
            <person name="Schleicher M."/>
            <person name="Weinstock G.M."/>
            <person name="Rosenthal A."/>
            <person name="Cox E.C."/>
            <person name="Chisholm R.L."/>
            <person name="Gibbs R.A."/>
            <person name="Loomis W.F."/>
            <person name="Platzer M."/>
            <person name="Kay R.R."/>
            <person name="Williams J.G."/>
            <person name="Dear P.H."/>
            <person name="Noegel A.A."/>
            <person name="Barrell B.G."/>
            <person name="Kuspa A."/>
        </authorList>
    </citation>
    <scope>NUCLEOTIDE SEQUENCE [LARGE SCALE GENOMIC DNA]</scope>
    <source>
        <strain>AX4</strain>
    </source>
</reference>
<dbReference type="EMBL" id="AAFI02000054">
    <property type="protein sequence ID" value="EAL65760.1"/>
    <property type="molecule type" value="Genomic_DNA"/>
</dbReference>
<dbReference type="RefSeq" id="XP_639118.1">
    <property type="nucleotide sequence ID" value="XM_634026.1"/>
</dbReference>
<dbReference type="SMR" id="Q54R65"/>
<dbReference type="FunCoup" id="Q54R65">
    <property type="interactions" value="7"/>
</dbReference>
<dbReference type="STRING" id="44689.Q54R65"/>
<dbReference type="PaxDb" id="44689-DDB0232097"/>
<dbReference type="EnsemblProtists" id="EAL65760">
    <property type="protein sequence ID" value="EAL65760"/>
    <property type="gene ID" value="DDB_G0283367"/>
</dbReference>
<dbReference type="GeneID" id="8624051"/>
<dbReference type="KEGG" id="ddi:DDB_G0283367"/>
<dbReference type="dictyBase" id="DDB_G0283367">
    <property type="gene designation" value="cofE"/>
</dbReference>
<dbReference type="VEuPathDB" id="AmoebaDB:DDB_G0283367"/>
<dbReference type="eggNOG" id="KOG1735">
    <property type="taxonomic scope" value="Eukaryota"/>
</dbReference>
<dbReference type="HOGENOM" id="CLU_094004_3_2_1"/>
<dbReference type="InParanoid" id="Q54R65"/>
<dbReference type="OMA" id="YVIFRVD"/>
<dbReference type="PhylomeDB" id="Q54R65"/>
<dbReference type="PRO" id="PR:Q54R65"/>
<dbReference type="Proteomes" id="UP000002195">
    <property type="component" value="Chromosome 4"/>
</dbReference>
<dbReference type="GO" id="GO:0015629">
    <property type="term" value="C:actin cytoskeleton"/>
    <property type="evidence" value="ECO:0000250"/>
    <property type="project" value="dictyBase"/>
</dbReference>
<dbReference type="GO" id="GO:0005737">
    <property type="term" value="C:cytoplasm"/>
    <property type="evidence" value="ECO:0000318"/>
    <property type="project" value="GO_Central"/>
</dbReference>
<dbReference type="GO" id="GO:0051015">
    <property type="term" value="F:actin filament binding"/>
    <property type="evidence" value="ECO:0000318"/>
    <property type="project" value="GO_Central"/>
</dbReference>
<dbReference type="GO" id="GO:0030042">
    <property type="term" value="P:actin filament depolymerization"/>
    <property type="evidence" value="ECO:0000318"/>
    <property type="project" value="GO_Central"/>
</dbReference>
<dbReference type="GO" id="GO:0051014">
    <property type="term" value="P:actin filament severing"/>
    <property type="evidence" value="ECO:0000318"/>
    <property type="project" value="GO_Central"/>
</dbReference>
<dbReference type="CDD" id="cd11286">
    <property type="entry name" value="ADF_cofilin_like"/>
    <property type="match status" value="1"/>
</dbReference>
<dbReference type="Gene3D" id="3.40.20.10">
    <property type="entry name" value="Severin"/>
    <property type="match status" value="1"/>
</dbReference>
<dbReference type="InterPro" id="IPR002108">
    <property type="entry name" value="ADF-H"/>
</dbReference>
<dbReference type="InterPro" id="IPR029006">
    <property type="entry name" value="ADF-H/Gelsolin-like_dom_sf"/>
</dbReference>
<dbReference type="InterPro" id="IPR017904">
    <property type="entry name" value="ADF/Cofilin"/>
</dbReference>
<dbReference type="PANTHER" id="PTHR11913">
    <property type="entry name" value="COFILIN-RELATED"/>
    <property type="match status" value="1"/>
</dbReference>
<dbReference type="Pfam" id="PF00241">
    <property type="entry name" value="Cofilin_ADF"/>
    <property type="match status" value="1"/>
</dbReference>
<dbReference type="SMART" id="SM00102">
    <property type="entry name" value="ADF"/>
    <property type="match status" value="1"/>
</dbReference>
<dbReference type="SUPFAM" id="SSF55753">
    <property type="entry name" value="Actin depolymerizing proteins"/>
    <property type="match status" value="1"/>
</dbReference>
<dbReference type="PROSITE" id="PS51263">
    <property type="entry name" value="ADF_H"/>
    <property type="match status" value="1"/>
</dbReference>
<accession>Q54R65</accession>
<proteinExistence type="inferred from homology"/>
<keyword id="KW-0009">Actin-binding</keyword>
<keyword id="KW-0963">Cytoplasm</keyword>
<keyword id="KW-0206">Cytoskeleton</keyword>
<keyword id="KW-1185">Reference proteome</keyword>
<sequence>MNSCASINDEVITKYNELILGHISKGIIIKFSDDFKEVVFEDSFNGESFEDYINKFPQDDCRYGVYDFSYMDNKENKKNKIFFISWCPVETKIKNKIVHTATEQSIYKKLVGIDAIIKATDNTEISQSLVEERCK</sequence>
<protein>
    <recommendedName>
        <fullName>Cofilin-4</fullName>
    </recommendedName>
</protein>
<feature type="chain" id="PRO_0000365598" description="Cofilin-4">
    <location>
        <begin position="1"/>
        <end position="135"/>
    </location>
</feature>
<feature type="domain" description="ADF-H" evidence="2">
    <location>
        <begin position="3"/>
        <end position="135"/>
    </location>
</feature>
<organism>
    <name type="scientific">Dictyostelium discoideum</name>
    <name type="common">Social amoeba</name>
    <dbReference type="NCBI Taxonomy" id="44689"/>
    <lineage>
        <taxon>Eukaryota</taxon>
        <taxon>Amoebozoa</taxon>
        <taxon>Evosea</taxon>
        <taxon>Eumycetozoa</taxon>
        <taxon>Dictyostelia</taxon>
        <taxon>Dictyosteliales</taxon>
        <taxon>Dictyosteliaceae</taxon>
        <taxon>Dictyostelium</taxon>
    </lineage>
</organism>
<evidence type="ECO:0000250" key="1"/>
<evidence type="ECO:0000255" key="2">
    <source>
        <dbReference type="PROSITE-ProRule" id="PRU00599"/>
    </source>
</evidence>
<evidence type="ECO:0000305" key="3"/>
<comment type="function">
    <text evidence="1">Controls actin polymerization and depolymerization.</text>
</comment>
<comment type="subcellular location">
    <subcellularLocation>
        <location evidence="1">Cytoplasm</location>
        <location evidence="1">Cytoskeleton</location>
    </subcellularLocation>
</comment>
<comment type="similarity">
    <text evidence="3">Belongs to the actin-binding proteins ADF family.</text>
</comment>